<organism>
    <name type="scientific">Welwitschia mirabilis</name>
    <name type="common">Tree tumbo</name>
    <name type="synonym">Welwitschia bainesii</name>
    <dbReference type="NCBI Taxonomy" id="3377"/>
    <lineage>
        <taxon>Eukaryota</taxon>
        <taxon>Viridiplantae</taxon>
        <taxon>Streptophyta</taxon>
        <taxon>Embryophyta</taxon>
        <taxon>Tracheophyta</taxon>
        <taxon>Spermatophyta</taxon>
        <taxon>Gnetopsida</taxon>
        <taxon>Gnetidae</taxon>
        <taxon>Welwitschiales</taxon>
        <taxon>Welwitschiaceae</taxon>
        <taxon>Welwitschia</taxon>
    </lineage>
</organism>
<name>PSB30_WELMI</name>
<gene>
    <name evidence="1" type="primary">psb30</name>
    <name evidence="1" type="synonym">ycf12</name>
</gene>
<proteinExistence type="inferred from homology"/>
<accession>B2Y1W3</accession>
<geneLocation type="chloroplast"/>
<comment type="function">
    <text evidence="1">A core subunit of photosystem II (PSII), probably helps stabilize the reaction center.</text>
</comment>
<comment type="subunit">
    <text evidence="1">PSII is composed of 1 copy each of membrane proteins PsbA, PsbB, PsbC, PsbD, PsbE, PsbF, PsbH, PsbI, PsbJ, PsbK, PsbL, PsbM, PsbT, PsbX, PsbY, PsbZ, Psb30/Ycf12, peripheral proteins of the oxygen-evolving complex and a large number of cofactors. It forms dimeric complexes.</text>
</comment>
<comment type="subcellular location">
    <subcellularLocation>
        <location evidence="1">Plastid</location>
        <location evidence="1">Chloroplast thylakoid membrane</location>
        <topology evidence="1">Single-pass membrane protein</topology>
    </subcellularLocation>
</comment>
<comment type="similarity">
    <text evidence="1">Belongs to the Psb30/Ycf12 family.</text>
</comment>
<protein>
    <recommendedName>
        <fullName evidence="1">Photosystem II reaction center protein Psb30</fullName>
    </recommendedName>
    <alternativeName>
        <fullName evidence="1">Photosystem II reaction center protein Ycf12</fullName>
    </alternativeName>
</protein>
<sequence>MNIEVIAQLTMLTIAVITGPLVIFFLAIRKGNL</sequence>
<reference key="1">
    <citation type="journal article" date="2008" name="BMC Evol. Biol.">
        <title>The complete plastid genome sequence of Welwitschia mirabilis: an unusually compact plastome with accelerated divergence rates.</title>
        <authorList>
            <person name="McCoy S.R."/>
            <person name="Kuehl J.V."/>
            <person name="Boore J.L."/>
            <person name="Raubeson L.A."/>
        </authorList>
    </citation>
    <scope>NUCLEOTIDE SEQUENCE [LARGE SCALE GENOMIC DNA]</scope>
</reference>
<reference key="2">
    <citation type="journal article" date="2009" name="Mol. Phylogenet. Evol.">
        <title>Evolution of reduced and compact chloroplast genomes (cpDNAs) in gnetophytes: Selection toward a lower-cost strategy.</title>
        <authorList>
            <person name="Wu C.-S."/>
            <person name="Lai Y.-T."/>
            <person name="Lin C.-P."/>
            <person name="Wang Y.-N."/>
            <person name="Chaw S.-M."/>
        </authorList>
    </citation>
    <scope>NUCLEOTIDE SEQUENCE [LARGE SCALE GENOMIC DNA]</scope>
</reference>
<keyword id="KW-0150">Chloroplast</keyword>
<keyword id="KW-0472">Membrane</keyword>
<keyword id="KW-0602">Photosynthesis</keyword>
<keyword id="KW-0604">Photosystem II</keyword>
<keyword id="KW-0934">Plastid</keyword>
<keyword id="KW-0793">Thylakoid</keyword>
<keyword id="KW-0812">Transmembrane</keyword>
<keyword id="KW-1133">Transmembrane helix</keyword>
<dbReference type="EMBL" id="EU342371">
    <property type="protein sequence ID" value="ABY26793.1"/>
    <property type="molecule type" value="Genomic_DNA"/>
</dbReference>
<dbReference type="EMBL" id="AP009568">
    <property type="protein sequence ID" value="BAH11225.1"/>
    <property type="molecule type" value="Genomic_DNA"/>
</dbReference>
<dbReference type="RefSeq" id="YP_001876580.1">
    <property type="nucleotide sequence ID" value="NC_010654.1"/>
</dbReference>
<dbReference type="SMR" id="B2Y1W3"/>
<dbReference type="GeneID" id="6276252"/>
<dbReference type="GO" id="GO:0009535">
    <property type="term" value="C:chloroplast thylakoid membrane"/>
    <property type="evidence" value="ECO:0007669"/>
    <property type="project" value="UniProtKB-SubCell"/>
</dbReference>
<dbReference type="GO" id="GO:0009523">
    <property type="term" value="C:photosystem II"/>
    <property type="evidence" value="ECO:0007669"/>
    <property type="project" value="UniProtKB-KW"/>
</dbReference>
<dbReference type="GO" id="GO:0015979">
    <property type="term" value="P:photosynthesis"/>
    <property type="evidence" value="ECO:0007669"/>
    <property type="project" value="UniProtKB-KW"/>
</dbReference>
<dbReference type="HAMAP" id="MF_01329">
    <property type="entry name" value="PSII_Psb30_Ycf12"/>
    <property type="match status" value="1"/>
</dbReference>
<dbReference type="InterPro" id="IPR010284">
    <property type="entry name" value="PSII_Ycf12_core-subunit"/>
</dbReference>
<dbReference type="NCBIfam" id="NF010239">
    <property type="entry name" value="PRK13686.1"/>
    <property type="match status" value="1"/>
</dbReference>
<dbReference type="Pfam" id="PF05969">
    <property type="entry name" value="PSII_Ycf12"/>
    <property type="match status" value="1"/>
</dbReference>
<feature type="chain" id="PRO_0000365273" description="Photosystem II reaction center protein Psb30">
    <location>
        <begin position="1"/>
        <end position="33"/>
    </location>
</feature>
<feature type="transmembrane region" description="Helical" evidence="1">
    <location>
        <begin position="5"/>
        <end position="25"/>
    </location>
</feature>
<evidence type="ECO:0000255" key="1">
    <source>
        <dbReference type="HAMAP-Rule" id="MF_01329"/>
    </source>
</evidence>